<accession>Q0T8U3</accession>
<dbReference type="EC" id="2.1.1.172" evidence="1"/>
<dbReference type="EMBL" id="CP000247">
    <property type="protein sequence ID" value="ABG72636.1"/>
    <property type="molecule type" value="Genomic_DNA"/>
</dbReference>
<dbReference type="RefSeq" id="WP_001272356.1">
    <property type="nucleotide sequence ID" value="NC_008253.1"/>
</dbReference>
<dbReference type="SMR" id="Q0T8U3"/>
<dbReference type="KEGG" id="ecp:ECP_4754"/>
<dbReference type="HOGENOM" id="CLU_049581_0_1_6"/>
<dbReference type="Proteomes" id="UP000009182">
    <property type="component" value="Chromosome"/>
</dbReference>
<dbReference type="GO" id="GO:0005737">
    <property type="term" value="C:cytoplasm"/>
    <property type="evidence" value="ECO:0007669"/>
    <property type="project" value="UniProtKB-SubCell"/>
</dbReference>
<dbReference type="GO" id="GO:0052914">
    <property type="term" value="F:16S rRNA (guanine(1207)-N(2))-methyltransferase activity"/>
    <property type="evidence" value="ECO:0007669"/>
    <property type="project" value="UniProtKB-EC"/>
</dbReference>
<dbReference type="GO" id="GO:0003676">
    <property type="term" value="F:nucleic acid binding"/>
    <property type="evidence" value="ECO:0007669"/>
    <property type="project" value="InterPro"/>
</dbReference>
<dbReference type="CDD" id="cd02440">
    <property type="entry name" value="AdoMet_MTases"/>
    <property type="match status" value="1"/>
</dbReference>
<dbReference type="FunFam" id="3.40.50.150:FF:000058">
    <property type="entry name" value="Ribosomal RNA small subunit methyltransferase C"/>
    <property type="match status" value="1"/>
</dbReference>
<dbReference type="FunFam" id="3.40.50.150:FF:000063">
    <property type="entry name" value="Ribosomal RNA small subunit methyltransferase C"/>
    <property type="match status" value="1"/>
</dbReference>
<dbReference type="Gene3D" id="3.40.50.150">
    <property type="entry name" value="Vaccinia Virus protein VP39"/>
    <property type="match status" value="2"/>
</dbReference>
<dbReference type="HAMAP" id="MF_01862">
    <property type="entry name" value="16SrRNA_methyltr_C"/>
    <property type="match status" value="1"/>
</dbReference>
<dbReference type="InterPro" id="IPR002052">
    <property type="entry name" value="DNA_methylase_N6_adenine_CS"/>
</dbReference>
<dbReference type="InterPro" id="IPR013675">
    <property type="entry name" value="Mtase_sm_N"/>
</dbReference>
<dbReference type="InterPro" id="IPR023543">
    <property type="entry name" value="rRNA_ssu_MeTfrase_C"/>
</dbReference>
<dbReference type="InterPro" id="IPR046977">
    <property type="entry name" value="RsmC/RlmG"/>
</dbReference>
<dbReference type="InterPro" id="IPR029063">
    <property type="entry name" value="SAM-dependent_MTases_sf"/>
</dbReference>
<dbReference type="InterPro" id="IPR007848">
    <property type="entry name" value="Small_mtfrase_dom"/>
</dbReference>
<dbReference type="NCBIfam" id="NF007023">
    <property type="entry name" value="PRK09489.1"/>
    <property type="match status" value="1"/>
</dbReference>
<dbReference type="PANTHER" id="PTHR47816">
    <property type="entry name" value="RIBOSOMAL RNA SMALL SUBUNIT METHYLTRANSFERASE C"/>
    <property type="match status" value="1"/>
</dbReference>
<dbReference type="PANTHER" id="PTHR47816:SF4">
    <property type="entry name" value="RIBOSOMAL RNA SMALL SUBUNIT METHYLTRANSFERASE C"/>
    <property type="match status" value="1"/>
</dbReference>
<dbReference type="Pfam" id="PF05175">
    <property type="entry name" value="MTS"/>
    <property type="match status" value="1"/>
</dbReference>
<dbReference type="Pfam" id="PF08468">
    <property type="entry name" value="MTS_N"/>
    <property type="match status" value="1"/>
</dbReference>
<dbReference type="SUPFAM" id="SSF53335">
    <property type="entry name" value="S-adenosyl-L-methionine-dependent methyltransferases"/>
    <property type="match status" value="1"/>
</dbReference>
<reference key="1">
    <citation type="journal article" date="2006" name="Mol. Microbiol.">
        <title>Role of pathogenicity island-associated integrases in the genome plasticity of uropathogenic Escherichia coli strain 536.</title>
        <authorList>
            <person name="Hochhut B."/>
            <person name="Wilde C."/>
            <person name="Balling G."/>
            <person name="Middendorf B."/>
            <person name="Dobrindt U."/>
            <person name="Brzuszkiewicz E."/>
            <person name="Gottschalk G."/>
            <person name="Carniel E."/>
            <person name="Hacker J."/>
        </authorList>
    </citation>
    <scope>NUCLEOTIDE SEQUENCE [LARGE SCALE GENOMIC DNA]</scope>
    <source>
        <strain>536 / UPEC</strain>
    </source>
</reference>
<comment type="function">
    <text evidence="1">Specifically methylates the guanine in position 1207 of 16S rRNA in the 30S particle.</text>
</comment>
<comment type="catalytic activity">
    <reaction evidence="1">
        <text>guanosine(1207) in 16S rRNA + S-adenosyl-L-methionine = N(2)-methylguanosine(1207) in 16S rRNA + S-adenosyl-L-homocysteine + H(+)</text>
        <dbReference type="Rhea" id="RHEA:42736"/>
        <dbReference type="Rhea" id="RHEA-COMP:10213"/>
        <dbReference type="Rhea" id="RHEA-COMP:10214"/>
        <dbReference type="ChEBI" id="CHEBI:15378"/>
        <dbReference type="ChEBI" id="CHEBI:57856"/>
        <dbReference type="ChEBI" id="CHEBI:59789"/>
        <dbReference type="ChEBI" id="CHEBI:74269"/>
        <dbReference type="ChEBI" id="CHEBI:74481"/>
        <dbReference type="EC" id="2.1.1.172"/>
    </reaction>
</comment>
<comment type="subunit">
    <text evidence="1">Monomer.</text>
</comment>
<comment type="subcellular location">
    <subcellularLocation>
        <location evidence="1">Cytoplasm</location>
    </subcellularLocation>
</comment>
<comment type="similarity">
    <text evidence="1">Belongs to the methyltransferase superfamily. RsmC family.</text>
</comment>
<sequence length="343" mass="37670">MSAFTPASEVLLRHSDDFEQSRILFAGDLQDDLPARLDTATSRAHTQQFHHWQVLSRQMGDNARFSLVATADDVADCDTLIYYWPKNKPEAQFQLMNLLSLLPVGTDIFVVGENRSGVRSAEQMLADYAPLNKVDSARRCGLYFGRLEKQPVFDANKFWGEYSVDGLTVKTLPGVFSRDGLDVGSQLLLSTLTPHTKGKVLDVGCGAGVLSVAFARHSPKIRLTLCDVSAPAVEASRATLATNGVEGEVFASNVFSEVKGRFDMIISNPPFHDGMQTSLDAAQTLIRGAVRHLNSGGELRIVANAFLPYPDVLDETFGFHEVIAQTGRFKVYRAIMTRQAKKG</sequence>
<protein>
    <recommendedName>
        <fullName evidence="1">Ribosomal RNA small subunit methyltransferase C</fullName>
        <ecNumber evidence="1">2.1.1.172</ecNumber>
    </recommendedName>
    <alternativeName>
        <fullName evidence="1">16S rRNA m2G1207 methyltransferase</fullName>
    </alternativeName>
    <alternativeName>
        <fullName evidence="1">rRNA (guanine-N(2)-)-methyltransferase RsmC</fullName>
    </alternativeName>
</protein>
<proteinExistence type="inferred from homology"/>
<feature type="chain" id="PRO_0000369711" description="Ribosomal RNA small subunit methyltransferase C">
    <location>
        <begin position="1"/>
        <end position="343"/>
    </location>
</feature>
<name>RSMC_ECOL5</name>
<keyword id="KW-0963">Cytoplasm</keyword>
<keyword id="KW-0489">Methyltransferase</keyword>
<keyword id="KW-0698">rRNA processing</keyword>
<keyword id="KW-0949">S-adenosyl-L-methionine</keyword>
<keyword id="KW-0808">Transferase</keyword>
<evidence type="ECO:0000255" key="1">
    <source>
        <dbReference type="HAMAP-Rule" id="MF_01862"/>
    </source>
</evidence>
<gene>
    <name evidence="1" type="primary">rsmC</name>
    <name type="ordered locus">ECP_4754</name>
</gene>
<organism>
    <name type="scientific">Escherichia coli O6:K15:H31 (strain 536 / UPEC)</name>
    <dbReference type="NCBI Taxonomy" id="362663"/>
    <lineage>
        <taxon>Bacteria</taxon>
        <taxon>Pseudomonadati</taxon>
        <taxon>Pseudomonadota</taxon>
        <taxon>Gammaproteobacteria</taxon>
        <taxon>Enterobacterales</taxon>
        <taxon>Enterobacteriaceae</taxon>
        <taxon>Escherichia</taxon>
    </lineage>
</organism>